<feature type="signal peptide" evidence="4">
    <location>
        <begin position="1"/>
        <end position="23"/>
    </location>
</feature>
<feature type="chain" id="PRO_0000031642" description="Ganglioside GM2 activator">
    <location>
        <begin position="24"/>
        <end position="190"/>
    </location>
</feature>
<feature type="glycosylation site" description="N-linked (GlcNAc...) asparagine" evidence="4">
    <location>
        <position position="60"/>
    </location>
</feature>
<feature type="disulfide bond" evidence="1">
    <location>
        <begin position="36"/>
        <end position="180"/>
    </location>
</feature>
<feature type="disulfide bond" evidence="1">
    <location>
        <begin position="96"/>
        <end position="103"/>
    </location>
</feature>
<feature type="disulfide bond" evidence="1">
    <location>
        <begin position="109"/>
        <end position="135"/>
    </location>
</feature>
<feature type="disulfide bond" evidence="1">
    <location>
        <begin position="122"/>
        <end position="133"/>
    </location>
</feature>
<feature type="sequence conflict" description="In Ref. 1; BAC20592." evidence="5" ref="1">
    <original>L</original>
    <variation>P</variation>
    <location>
        <position position="72"/>
    </location>
</feature>
<feature type="sequence conflict" description="In Ref. 1; BAC20592." evidence="5" ref="1">
    <original>F</original>
    <variation>S</variation>
    <location>
        <position position="108"/>
    </location>
</feature>
<feature type="sequence conflict" description="In Ref. 1; BAC20592." evidence="5" ref="1">
    <original>P</original>
    <variation>G</variation>
    <location>
        <position position="121"/>
    </location>
</feature>
<gene>
    <name type="primary">GM2A</name>
    <name type="ORF">QccE-17591</name>
</gene>
<protein>
    <recommendedName>
        <fullName>Ganglioside GM2 activator</fullName>
    </recommendedName>
    <alternativeName>
        <fullName>Cerebroside sulfate activator protein</fullName>
    </alternativeName>
    <alternativeName>
        <fullName>GM2-AP</fullName>
    </alternativeName>
    <alternativeName>
        <fullName>Sphingolipid activator protein 3</fullName>
        <shortName>SAP-3</shortName>
    </alternativeName>
</protein>
<name>SAP3_MACFA</name>
<comment type="function">
    <text evidence="2 3">The large binding pocket can accommodate several single chain phospholipids and fatty acids, GM2A also exhibits some calcium-independent phospholipase activity (By similarity). Binds gangliosides and stimulates ganglioside GM2 degradation. It stimulates only the breakdown of ganglioside GM2 and glycolipid GA2 by beta-hexosaminidase A. It extracts single GM2 molecules from membranes and presents them in soluble form to beta-hexosaminidase A for cleavage of N-acetyl-D-galactosamine and conversion to GM3 (By similarity). Has cholesterol transfer activity (By similarity).</text>
</comment>
<comment type="catalytic activity">
    <reaction evidence="2">
        <text>cholesterol(in) = cholesterol(out)</text>
        <dbReference type="Rhea" id="RHEA:39747"/>
        <dbReference type="ChEBI" id="CHEBI:16113"/>
    </reaction>
</comment>
<comment type="subcellular location">
    <subcellularLocation>
        <location evidence="1">Lysosome</location>
    </subcellularLocation>
</comment>
<sequence>MQSLMQAPVLIALGLLFAAPAQAHLKKLGSFSWDNCDEGKDPAVIRSLTLEPDPILIPGNVTVSVVGSTSVLLSSPLKVELVLEKEVAGLWIKIPCTDYIGSCTFEDFCDVLDMLIPTGEPCPEPLRTYGLPCHCPFKEGTYSLPKSEFVVPHLELPSWLTTGNYRIESILSNRGKRLGCIKIAASLKGV</sequence>
<evidence type="ECO:0000250" key="1"/>
<evidence type="ECO:0000250" key="2">
    <source>
        <dbReference type="UniProtKB" id="P17900"/>
    </source>
</evidence>
<evidence type="ECO:0000250" key="3">
    <source>
        <dbReference type="UniProtKB" id="Q60648"/>
    </source>
</evidence>
<evidence type="ECO:0000255" key="4"/>
<evidence type="ECO:0000305" key="5"/>
<reference key="1">
    <citation type="submission" date="2003-10" db="EMBL/GenBank/DDBJ databases">
        <title>Isolation and characterization of cDNA for macaque neurological disease genes.</title>
        <authorList>
            <person name="Kusuda J."/>
            <person name="Osada N."/>
            <person name="Hida M."/>
            <person name="Sugano S."/>
            <person name="Hashimoto K."/>
        </authorList>
    </citation>
    <scope>NUCLEOTIDE SEQUENCE [LARGE SCALE MRNA]</scope>
    <source>
        <tissue>Brain cortex</tissue>
        <tissue>Temporal cortex</tissue>
    </source>
</reference>
<keyword id="KW-1015">Disulfide bond</keyword>
<keyword id="KW-0325">Glycoprotein</keyword>
<keyword id="KW-0378">Hydrolase</keyword>
<keyword id="KW-0443">Lipid metabolism</keyword>
<keyword id="KW-0458">Lysosome</keyword>
<keyword id="KW-1185">Reference proteome</keyword>
<keyword id="KW-0732">Signal</keyword>
<keyword id="KW-0746">Sphingolipid metabolism</keyword>
<accession>Q8HXX6</accession>
<accession>Q60HF5</accession>
<proteinExistence type="evidence at transcript level"/>
<dbReference type="EMBL" id="AB083313">
    <property type="protein sequence ID" value="BAC20592.1"/>
    <property type="molecule type" value="mRNA"/>
</dbReference>
<dbReference type="EMBL" id="AB125172">
    <property type="protein sequence ID" value="BAD51960.1"/>
    <property type="molecule type" value="mRNA"/>
</dbReference>
<dbReference type="RefSeq" id="NP_001270491.1">
    <property type="nucleotide sequence ID" value="NM_001283562.1"/>
</dbReference>
<dbReference type="SMR" id="Q8HXX6"/>
<dbReference type="STRING" id="9541.ENSMFAP00000019502"/>
<dbReference type="GlyCosmos" id="Q8HXX6">
    <property type="glycosylation" value="1 site, No reported glycans"/>
</dbReference>
<dbReference type="eggNOG" id="ENOG502S05S">
    <property type="taxonomic scope" value="Eukaryota"/>
</dbReference>
<dbReference type="Proteomes" id="UP000233100">
    <property type="component" value="Unplaced"/>
</dbReference>
<dbReference type="GO" id="GO:0009898">
    <property type="term" value="C:cytoplasmic side of plasma membrane"/>
    <property type="evidence" value="ECO:0007669"/>
    <property type="project" value="TreeGrafter"/>
</dbReference>
<dbReference type="GO" id="GO:0005764">
    <property type="term" value="C:lysosome"/>
    <property type="evidence" value="ECO:0007669"/>
    <property type="project" value="UniProtKB-SubCell"/>
</dbReference>
<dbReference type="GO" id="GO:0008047">
    <property type="term" value="F:enzyme activator activity"/>
    <property type="evidence" value="ECO:0007669"/>
    <property type="project" value="InterPro"/>
</dbReference>
<dbReference type="GO" id="GO:0016787">
    <property type="term" value="F:hydrolase activity"/>
    <property type="evidence" value="ECO:0007669"/>
    <property type="project" value="UniProtKB-KW"/>
</dbReference>
<dbReference type="GO" id="GO:0005319">
    <property type="term" value="F:lipid transporter activity"/>
    <property type="evidence" value="ECO:0007669"/>
    <property type="project" value="TreeGrafter"/>
</dbReference>
<dbReference type="GO" id="GO:0006689">
    <property type="term" value="P:ganglioside catabolic process"/>
    <property type="evidence" value="ECO:0007669"/>
    <property type="project" value="InterPro"/>
</dbReference>
<dbReference type="FunFam" id="2.70.220.10:FF:000001">
    <property type="entry name" value="GM2 ganglioside activator protein"/>
    <property type="match status" value="1"/>
</dbReference>
<dbReference type="Gene3D" id="2.70.220.10">
    <property type="entry name" value="Ganglioside GM2 activator"/>
    <property type="match status" value="1"/>
</dbReference>
<dbReference type="InterPro" id="IPR028996">
    <property type="entry name" value="GM2-AP"/>
</dbReference>
<dbReference type="InterPro" id="IPR036846">
    <property type="entry name" value="GM2-AP_sf"/>
</dbReference>
<dbReference type="InterPro" id="IPR003172">
    <property type="entry name" value="ML_dom"/>
</dbReference>
<dbReference type="PANTHER" id="PTHR17357:SF0">
    <property type="entry name" value="GANGLIOSIDE GM2 ACTIVATOR"/>
    <property type="match status" value="1"/>
</dbReference>
<dbReference type="PANTHER" id="PTHR17357">
    <property type="entry name" value="GM2 GANGLIOSIDE ACTIVATOR PROTEIN"/>
    <property type="match status" value="1"/>
</dbReference>
<dbReference type="Pfam" id="PF02221">
    <property type="entry name" value="E1_DerP2_DerF2"/>
    <property type="match status" value="1"/>
</dbReference>
<dbReference type="SMART" id="SM00737">
    <property type="entry name" value="ML"/>
    <property type="match status" value="1"/>
</dbReference>
<dbReference type="SUPFAM" id="SSF63707">
    <property type="entry name" value="Ganglioside M2 (gm2) activator"/>
    <property type="match status" value="1"/>
</dbReference>
<organism>
    <name type="scientific">Macaca fascicularis</name>
    <name type="common">Crab-eating macaque</name>
    <name type="synonym">Cynomolgus monkey</name>
    <dbReference type="NCBI Taxonomy" id="9541"/>
    <lineage>
        <taxon>Eukaryota</taxon>
        <taxon>Metazoa</taxon>
        <taxon>Chordata</taxon>
        <taxon>Craniata</taxon>
        <taxon>Vertebrata</taxon>
        <taxon>Euteleostomi</taxon>
        <taxon>Mammalia</taxon>
        <taxon>Eutheria</taxon>
        <taxon>Euarchontoglires</taxon>
        <taxon>Primates</taxon>
        <taxon>Haplorrhini</taxon>
        <taxon>Catarrhini</taxon>
        <taxon>Cercopithecidae</taxon>
        <taxon>Cercopithecinae</taxon>
        <taxon>Macaca</taxon>
    </lineage>
</organism>